<name>BIOB_SPHAL</name>
<comment type="function">
    <text evidence="1">Catalyzes the conversion of dethiobiotin (DTB) to biotin by the insertion of a sulfur atom into dethiobiotin via a radical-based mechanism.</text>
</comment>
<comment type="catalytic activity">
    <reaction evidence="1">
        <text>(4R,5S)-dethiobiotin + (sulfur carrier)-SH + 2 reduced [2Fe-2S]-[ferredoxin] + 2 S-adenosyl-L-methionine = (sulfur carrier)-H + biotin + 2 5'-deoxyadenosine + 2 L-methionine + 2 oxidized [2Fe-2S]-[ferredoxin]</text>
        <dbReference type="Rhea" id="RHEA:22060"/>
        <dbReference type="Rhea" id="RHEA-COMP:10000"/>
        <dbReference type="Rhea" id="RHEA-COMP:10001"/>
        <dbReference type="Rhea" id="RHEA-COMP:14737"/>
        <dbReference type="Rhea" id="RHEA-COMP:14739"/>
        <dbReference type="ChEBI" id="CHEBI:17319"/>
        <dbReference type="ChEBI" id="CHEBI:29917"/>
        <dbReference type="ChEBI" id="CHEBI:33737"/>
        <dbReference type="ChEBI" id="CHEBI:33738"/>
        <dbReference type="ChEBI" id="CHEBI:57586"/>
        <dbReference type="ChEBI" id="CHEBI:57844"/>
        <dbReference type="ChEBI" id="CHEBI:59789"/>
        <dbReference type="ChEBI" id="CHEBI:64428"/>
        <dbReference type="ChEBI" id="CHEBI:149473"/>
        <dbReference type="EC" id="2.8.1.6"/>
    </reaction>
</comment>
<comment type="cofactor">
    <cofactor evidence="1">
        <name>[4Fe-4S] cluster</name>
        <dbReference type="ChEBI" id="CHEBI:49883"/>
    </cofactor>
    <text evidence="1">Binds 1 [4Fe-4S] cluster. The cluster is coordinated with 3 cysteines and an exchangeable S-adenosyl-L-methionine.</text>
</comment>
<comment type="cofactor">
    <cofactor evidence="1">
        <name>[2Fe-2S] cluster</name>
        <dbReference type="ChEBI" id="CHEBI:190135"/>
    </cofactor>
    <text evidence="1">Binds 1 [2Fe-2S] cluster. The cluster is coordinated with 3 cysteines and 1 arginine.</text>
</comment>
<comment type="pathway">
    <text evidence="1">Cofactor biosynthesis; biotin biosynthesis; biotin from 7,8-diaminononanoate: step 2/2.</text>
</comment>
<comment type="subunit">
    <text evidence="1">Homodimer.</text>
</comment>
<comment type="similarity">
    <text evidence="1">Belongs to the radical SAM superfamily. Biotin synthase family.</text>
</comment>
<sequence length="329" mass="35642">MRTDWTREEIAALFDLPFDELMWEAQGVHRRHHARGEIQLCTLLSIKTGGCVEDCGYCSQSAHADTGLKATKLMDVRAVLQAAAQAKDAGSKRFCMGAAWRNPKDRDMPAIVEMIEGVRAMGMETCMTLGMLSKEQAQVLGMAGLDYYNHNIDTSPEHYGNVITTRSFQDRLDTLEEVRAAGINVCSGGIVGMGETRADRVGFIHTLATLPEHPGSVPINALVPVKGTVLGDMLADTPLAKIDDIEFVRTVAVARITMPKSMVRLSAGRESMSEATQALCFMAGANSIFTGDKLLTTANAGDNADAALFAKLGLRPMESEEPMRMEAAE</sequence>
<organism>
    <name type="scientific">Sphingopyxis alaskensis (strain DSM 13593 / LMG 18877 / RB2256)</name>
    <name type="common">Sphingomonas alaskensis</name>
    <dbReference type="NCBI Taxonomy" id="317655"/>
    <lineage>
        <taxon>Bacteria</taxon>
        <taxon>Pseudomonadati</taxon>
        <taxon>Pseudomonadota</taxon>
        <taxon>Alphaproteobacteria</taxon>
        <taxon>Sphingomonadales</taxon>
        <taxon>Sphingomonadaceae</taxon>
        <taxon>Sphingopyxis</taxon>
    </lineage>
</organism>
<dbReference type="EC" id="2.8.1.6" evidence="1"/>
<dbReference type="EMBL" id="CP000356">
    <property type="protein sequence ID" value="ABF52937.1"/>
    <property type="molecule type" value="Genomic_DNA"/>
</dbReference>
<dbReference type="RefSeq" id="WP_011541522.1">
    <property type="nucleotide sequence ID" value="NC_008048.1"/>
</dbReference>
<dbReference type="SMR" id="Q1GTT5"/>
<dbReference type="STRING" id="317655.Sala_1222"/>
<dbReference type="KEGG" id="sal:Sala_1222"/>
<dbReference type="eggNOG" id="COG0502">
    <property type="taxonomic scope" value="Bacteria"/>
</dbReference>
<dbReference type="HOGENOM" id="CLU_033172_1_2_5"/>
<dbReference type="OrthoDB" id="9786826at2"/>
<dbReference type="UniPathway" id="UPA00078">
    <property type="reaction ID" value="UER00162"/>
</dbReference>
<dbReference type="Proteomes" id="UP000006578">
    <property type="component" value="Chromosome"/>
</dbReference>
<dbReference type="GO" id="GO:0051537">
    <property type="term" value="F:2 iron, 2 sulfur cluster binding"/>
    <property type="evidence" value="ECO:0007669"/>
    <property type="project" value="UniProtKB-KW"/>
</dbReference>
<dbReference type="GO" id="GO:0051539">
    <property type="term" value="F:4 iron, 4 sulfur cluster binding"/>
    <property type="evidence" value="ECO:0007669"/>
    <property type="project" value="UniProtKB-KW"/>
</dbReference>
<dbReference type="GO" id="GO:0004076">
    <property type="term" value="F:biotin synthase activity"/>
    <property type="evidence" value="ECO:0007669"/>
    <property type="project" value="UniProtKB-UniRule"/>
</dbReference>
<dbReference type="GO" id="GO:0005506">
    <property type="term" value="F:iron ion binding"/>
    <property type="evidence" value="ECO:0007669"/>
    <property type="project" value="UniProtKB-UniRule"/>
</dbReference>
<dbReference type="GO" id="GO:0009102">
    <property type="term" value="P:biotin biosynthetic process"/>
    <property type="evidence" value="ECO:0007669"/>
    <property type="project" value="UniProtKB-UniRule"/>
</dbReference>
<dbReference type="CDD" id="cd01335">
    <property type="entry name" value="Radical_SAM"/>
    <property type="match status" value="1"/>
</dbReference>
<dbReference type="FunFam" id="3.20.20.70:FF:000011">
    <property type="entry name" value="Biotin synthase"/>
    <property type="match status" value="1"/>
</dbReference>
<dbReference type="Gene3D" id="3.20.20.70">
    <property type="entry name" value="Aldolase class I"/>
    <property type="match status" value="1"/>
</dbReference>
<dbReference type="HAMAP" id="MF_01694">
    <property type="entry name" value="BioB"/>
    <property type="match status" value="1"/>
</dbReference>
<dbReference type="InterPro" id="IPR013785">
    <property type="entry name" value="Aldolase_TIM"/>
</dbReference>
<dbReference type="InterPro" id="IPR010722">
    <property type="entry name" value="BATS_dom"/>
</dbReference>
<dbReference type="InterPro" id="IPR002684">
    <property type="entry name" value="Biotin_synth/BioAB"/>
</dbReference>
<dbReference type="InterPro" id="IPR024177">
    <property type="entry name" value="Biotin_synthase"/>
</dbReference>
<dbReference type="InterPro" id="IPR006638">
    <property type="entry name" value="Elp3/MiaA/NifB-like_rSAM"/>
</dbReference>
<dbReference type="InterPro" id="IPR007197">
    <property type="entry name" value="rSAM"/>
</dbReference>
<dbReference type="NCBIfam" id="TIGR00433">
    <property type="entry name" value="bioB"/>
    <property type="match status" value="1"/>
</dbReference>
<dbReference type="PANTHER" id="PTHR22976">
    <property type="entry name" value="BIOTIN SYNTHASE"/>
    <property type="match status" value="1"/>
</dbReference>
<dbReference type="PANTHER" id="PTHR22976:SF2">
    <property type="entry name" value="BIOTIN SYNTHASE, MITOCHONDRIAL"/>
    <property type="match status" value="1"/>
</dbReference>
<dbReference type="Pfam" id="PF06968">
    <property type="entry name" value="BATS"/>
    <property type="match status" value="1"/>
</dbReference>
<dbReference type="Pfam" id="PF04055">
    <property type="entry name" value="Radical_SAM"/>
    <property type="match status" value="1"/>
</dbReference>
<dbReference type="PIRSF" id="PIRSF001619">
    <property type="entry name" value="Biotin_synth"/>
    <property type="match status" value="1"/>
</dbReference>
<dbReference type="SFLD" id="SFLDF00272">
    <property type="entry name" value="biotin_synthase"/>
    <property type="match status" value="1"/>
</dbReference>
<dbReference type="SFLD" id="SFLDG01278">
    <property type="entry name" value="biotin_synthase_like"/>
    <property type="match status" value="1"/>
</dbReference>
<dbReference type="SMART" id="SM00876">
    <property type="entry name" value="BATS"/>
    <property type="match status" value="1"/>
</dbReference>
<dbReference type="SMART" id="SM00729">
    <property type="entry name" value="Elp3"/>
    <property type="match status" value="1"/>
</dbReference>
<dbReference type="SUPFAM" id="SSF102114">
    <property type="entry name" value="Radical SAM enzymes"/>
    <property type="match status" value="1"/>
</dbReference>
<dbReference type="PROSITE" id="PS51918">
    <property type="entry name" value="RADICAL_SAM"/>
    <property type="match status" value="1"/>
</dbReference>
<proteinExistence type="inferred from homology"/>
<gene>
    <name evidence="1" type="primary">bioB</name>
    <name type="ordered locus">Sala_1222</name>
</gene>
<feature type="chain" id="PRO_0000381640" description="Biotin synthase">
    <location>
        <begin position="1"/>
        <end position="329"/>
    </location>
</feature>
<feature type="domain" description="Radical SAM core" evidence="2">
    <location>
        <begin position="36"/>
        <end position="260"/>
    </location>
</feature>
<feature type="binding site" evidence="1">
    <location>
        <position position="51"/>
    </location>
    <ligand>
        <name>[4Fe-4S] cluster</name>
        <dbReference type="ChEBI" id="CHEBI:49883"/>
        <note>4Fe-4S-S-AdoMet</note>
    </ligand>
</feature>
<feature type="binding site" evidence="1">
    <location>
        <position position="55"/>
    </location>
    <ligand>
        <name>[4Fe-4S] cluster</name>
        <dbReference type="ChEBI" id="CHEBI:49883"/>
        <note>4Fe-4S-S-AdoMet</note>
    </ligand>
</feature>
<feature type="binding site" evidence="1">
    <location>
        <position position="58"/>
    </location>
    <ligand>
        <name>[4Fe-4S] cluster</name>
        <dbReference type="ChEBI" id="CHEBI:49883"/>
        <note>4Fe-4S-S-AdoMet</note>
    </ligand>
</feature>
<feature type="binding site" evidence="1">
    <location>
        <position position="95"/>
    </location>
    <ligand>
        <name>[2Fe-2S] cluster</name>
        <dbReference type="ChEBI" id="CHEBI:190135"/>
    </ligand>
</feature>
<feature type="binding site" evidence="1">
    <location>
        <position position="126"/>
    </location>
    <ligand>
        <name>[2Fe-2S] cluster</name>
        <dbReference type="ChEBI" id="CHEBI:190135"/>
    </ligand>
</feature>
<feature type="binding site" evidence="1">
    <location>
        <position position="186"/>
    </location>
    <ligand>
        <name>[2Fe-2S] cluster</name>
        <dbReference type="ChEBI" id="CHEBI:190135"/>
    </ligand>
</feature>
<feature type="binding site" evidence="1">
    <location>
        <position position="264"/>
    </location>
    <ligand>
        <name>[2Fe-2S] cluster</name>
        <dbReference type="ChEBI" id="CHEBI:190135"/>
    </ligand>
</feature>
<protein>
    <recommendedName>
        <fullName evidence="1">Biotin synthase</fullName>
        <ecNumber evidence="1">2.8.1.6</ecNumber>
    </recommendedName>
</protein>
<accession>Q1GTT5</accession>
<keyword id="KW-0001">2Fe-2S</keyword>
<keyword id="KW-0004">4Fe-4S</keyword>
<keyword id="KW-0093">Biotin biosynthesis</keyword>
<keyword id="KW-0408">Iron</keyword>
<keyword id="KW-0411">Iron-sulfur</keyword>
<keyword id="KW-0479">Metal-binding</keyword>
<keyword id="KW-1185">Reference proteome</keyword>
<keyword id="KW-0949">S-adenosyl-L-methionine</keyword>
<keyword id="KW-0808">Transferase</keyword>
<reference key="1">
    <citation type="journal article" date="2009" name="Proc. Natl. Acad. Sci. U.S.A.">
        <title>The genomic basis of trophic strategy in marine bacteria.</title>
        <authorList>
            <person name="Lauro F.M."/>
            <person name="McDougald D."/>
            <person name="Thomas T."/>
            <person name="Williams T.J."/>
            <person name="Egan S."/>
            <person name="Rice S."/>
            <person name="DeMaere M.Z."/>
            <person name="Ting L."/>
            <person name="Ertan H."/>
            <person name="Johnson J."/>
            <person name="Ferriera S."/>
            <person name="Lapidus A."/>
            <person name="Anderson I."/>
            <person name="Kyrpides N."/>
            <person name="Munk A.C."/>
            <person name="Detter C."/>
            <person name="Han C.S."/>
            <person name="Brown M.V."/>
            <person name="Robb F.T."/>
            <person name="Kjelleberg S."/>
            <person name="Cavicchioli R."/>
        </authorList>
    </citation>
    <scope>NUCLEOTIDE SEQUENCE [LARGE SCALE GENOMIC DNA]</scope>
    <source>
        <strain>DSM 13593 / LMG 18877 / RB2256</strain>
    </source>
</reference>
<evidence type="ECO:0000255" key="1">
    <source>
        <dbReference type="HAMAP-Rule" id="MF_01694"/>
    </source>
</evidence>
<evidence type="ECO:0000255" key="2">
    <source>
        <dbReference type="PROSITE-ProRule" id="PRU01266"/>
    </source>
</evidence>